<organism>
    <name type="scientific">Paracoccus denitrificans (strain Pd 1222)</name>
    <dbReference type="NCBI Taxonomy" id="318586"/>
    <lineage>
        <taxon>Bacteria</taxon>
        <taxon>Pseudomonadati</taxon>
        <taxon>Pseudomonadota</taxon>
        <taxon>Alphaproteobacteria</taxon>
        <taxon>Rhodobacterales</taxon>
        <taxon>Paracoccaceae</taxon>
        <taxon>Paracoccus</taxon>
    </lineage>
</organism>
<protein>
    <recommendedName>
        <fullName evidence="1">Macrolide export ATP-binding/permease protein MacB 1/2</fullName>
        <ecNumber evidence="1">7.6.2.-</ecNumber>
    </recommendedName>
</protein>
<accession>A1B677</accession>
<feature type="chain" id="PRO_0000280169" description="Macrolide export ATP-binding/permease protein MacB 1/2">
    <location>
        <begin position="1"/>
        <end position="668"/>
    </location>
</feature>
<feature type="transmembrane region" description="Helical" evidence="1">
    <location>
        <begin position="294"/>
        <end position="314"/>
    </location>
</feature>
<feature type="transmembrane region" description="Helical" evidence="1">
    <location>
        <begin position="541"/>
        <end position="561"/>
    </location>
</feature>
<feature type="transmembrane region" description="Helical" evidence="1">
    <location>
        <begin position="598"/>
        <end position="618"/>
    </location>
</feature>
<feature type="transmembrane region" description="Helical" evidence="1">
    <location>
        <begin position="634"/>
        <end position="654"/>
    </location>
</feature>
<feature type="domain" description="ABC transporter" evidence="1">
    <location>
        <begin position="9"/>
        <end position="247"/>
    </location>
</feature>
<feature type="region of interest" description="Disordered" evidence="2">
    <location>
        <begin position="230"/>
        <end position="257"/>
    </location>
</feature>
<feature type="compositionally biased region" description="Pro residues" evidence="2">
    <location>
        <begin position="237"/>
        <end position="255"/>
    </location>
</feature>
<feature type="binding site" evidence="1">
    <location>
        <begin position="45"/>
        <end position="52"/>
    </location>
    <ligand>
        <name>ATP</name>
        <dbReference type="ChEBI" id="CHEBI:30616"/>
    </ligand>
</feature>
<dbReference type="EC" id="7.6.2.-" evidence="1"/>
<dbReference type="EMBL" id="CP000490">
    <property type="protein sequence ID" value="ABL71021.1"/>
    <property type="molecule type" value="Genomic_DNA"/>
</dbReference>
<dbReference type="EMBL" id="CP000490">
    <property type="protein sequence ID" value="ABL71515.1"/>
    <property type="molecule type" value="Genomic_DNA"/>
</dbReference>
<dbReference type="RefSeq" id="WP_011749211.1">
    <property type="nucleotide sequence ID" value="NC_008687.1"/>
</dbReference>
<dbReference type="SMR" id="A1B677"/>
<dbReference type="STRING" id="318586.Pden_2937"/>
<dbReference type="EnsemblBacteria" id="ABL71021">
    <property type="protein sequence ID" value="ABL71021"/>
    <property type="gene ID" value="Pden_2937"/>
</dbReference>
<dbReference type="EnsemblBacteria" id="ABL71515">
    <property type="protein sequence ID" value="ABL71515"/>
    <property type="gene ID" value="Pden_3444"/>
</dbReference>
<dbReference type="GeneID" id="93453098"/>
<dbReference type="KEGG" id="pde:Pden_2937"/>
<dbReference type="KEGG" id="pde:Pden_3444"/>
<dbReference type="eggNOG" id="COG0577">
    <property type="taxonomic scope" value="Bacteria"/>
</dbReference>
<dbReference type="eggNOG" id="COG1136">
    <property type="taxonomic scope" value="Bacteria"/>
</dbReference>
<dbReference type="HOGENOM" id="CLU_000604_78_1_5"/>
<dbReference type="OrthoDB" id="9802264at2"/>
<dbReference type="Proteomes" id="UP000000361">
    <property type="component" value="Chromosome 2"/>
</dbReference>
<dbReference type="GO" id="GO:0005886">
    <property type="term" value="C:plasma membrane"/>
    <property type="evidence" value="ECO:0007669"/>
    <property type="project" value="UniProtKB-SubCell"/>
</dbReference>
<dbReference type="GO" id="GO:0005524">
    <property type="term" value="F:ATP binding"/>
    <property type="evidence" value="ECO:0007669"/>
    <property type="project" value="UniProtKB-KW"/>
</dbReference>
<dbReference type="GO" id="GO:0016887">
    <property type="term" value="F:ATP hydrolysis activity"/>
    <property type="evidence" value="ECO:0007669"/>
    <property type="project" value="InterPro"/>
</dbReference>
<dbReference type="GO" id="GO:0022857">
    <property type="term" value="F:transmembrane transporter activity"/>
    <property type="evidence" value="ECO:0007669"/>
    <property type="project" value="TreeGrafter"/>
</dbReference>
<dbReference type="GO" id="GO:0046677">
    <property type="term" value="P:response to antibiotic"/>
    <property type="evidence" value="ECO:0007669"/>
    <property type="project" value="UniProtKB-KW"/>
</dbReference>
<dbReference type="CDD" id="cd03255">
    <property type="entry name" value="ABC_MJ0796_LolCDE_FtsE"/>
    <property type="match status" value="1"/>
</dbReference>
<dbReference type="FunFam" id="3.40.50.300:FF:000032">
    <property type="entry name" value="Export ABC transporter ATP-binding protein"/>
    <property type="match status" value="1"/>
</dbReference>
<dbReference type="Gene3D" id="3.40.50.300">
    <property type="entry name" value="P-loop containing nucleotide triphosphate hydrolases"/>
    <property type="match status" value="1"/>
</dbReference>
<dbReference type="InterPro" id="IPR003593">
    <property type="entry name" value="AAA+_ATPase"/>
</dbReference>
<dbReference type="InterPro" id="IPR003838">
    <property type="entry name" value="ABC3_permease_C"/>
</dbReference>
<dbReference type="InterPro" id="IPR003439">
    <property type="entry name" value="ABC_transporter-like_ATP-bd"/>
</dbReference>
<dbReference type="InterPro" id="IPR017871">
    <property type="entry name" value="ABC_transporter-like_CS"/>
</dbReference>
<dbReference type="InterPro" id="IPR017911">
    <property type="entry name" value="MacB-like_ATP-bd"/>
</dbReference>
<dbReference type="InterPro" id="IPR025857">
    <property type="entry name" value="MacB_PCD"/>
</dbReference>
<dbReference type="InterPro" id="IPR050250">
    <property type="entry name" value="Macrolide_Exporter_MacB"/>
</dbReference>
<dbReference type="InterPro" id="IPR027417">
    <property type="entry name" value="P-loop_NTPase"/>
</dbReference>
<dbReference type="PANTHER" id="PTHR30572:SF14">
    <property type="entry name" value="MACROLIDE EXPORT ATP-BINDING_PERMEASE PROTEIN MACB"/>
    <property type="match status" value="1"/>
</dbReference>
<dbReference type="PANTHER" id="PTHR30572">
    <property type="entry name" value="MEMBRANE COMPONENT OF TRANSPORTER-RELATED"/>
    <property type="match status" value="1"/>
</dbReference>
<dbReference type="Pfam" id="PF00005">
    <property type="entry name" value="ABC_tran"/>
    <property type="match status" value="1"/>
</dbReference>
<dbReference type="Pfam" id="PF02687">
    <property type="entry name" value="FtsX"/>
    <property type="match status" value="1"/>
</dbReference>
<dbReference type="Pfam" id="PF12704">
    <property type="entry name" value="MacB_PCD"/>
    <property type="match status" value="1"/>
</dbReference>
<dbReference type="SMART" id="SM00382">
    <property type="entry name" value="AAA"/>
    <property type="match status" value="1"/>
</dbReference>
<dbReference type="SUPFAM" id="SSF52540">
    <property type="entry name" value="P-loop containing nucleoside triphosphate hydrolases"/>
    <property type="match status" value="1"/>
</dbReference>
<dbReference type="PROSITE" id="PS00211">
    <property type="entry name" value="ABC_TRANSPORTER_1"/>
    <property type="match status" value="1"/>
</dbReference>
<dbReference type="PROSITE" id="PS50893">
    <property type="entry name" value="ABC_TRANSPORTER_2"/>
    <property type="match status" value="1"/>
</dbReference>
<dbReference type="PROSITE" id="PS51267">
    <property type="entry name" value="MACB"/>
    <property type="match status" value="1"/>
</dbReference>
<name>MACB1_PARDP</name>
<evidence type="ECO:0000255" key="1">
    <source>
        <dbReference type="HAMAP-Rule" id="MF_01720"/>
    </source>
</evidence>
<evidence type="ECO:0000256" key="2">
    <source>
        <dbReference type="SAM" id="MobiDB-lite"/>
    </source>
</evidence>
<keyword id="KW-0046">Antibiotic resistance</keyword>
<keyword id="KW-0067">ATP-binding</keyword>
<keyword id="KW-0997">Cell inner membrane</keyword>
<keyword id="KW-1003">Cell membrane</keyword>
<keyword id="KW-0472">Membrane</keyword>
<keyword id="KW-0547">Nucleotide-binding</keyword>
<keyword id="KW-1185">Reference proteome</keyword>
<keyword id="KW-1278">Translocase</keyword>
<keyword id="KW-0812">Transmembrane</keyword>
<keyword id="KW-1133">Transmembrane helix</keyword>
<keyword id="KW-0813">Transport</keyword>
<reference key="1">
    <citation type="submission" date="2006-12" db="EMBL/GenBank/DDBJ databases">
        <title>Complete sequence of chromosome 2 of Paracoccus denitrificans PD1222.</title>
        <authorList>
            <person name="Copeland A."/>
            <person name="Lucas S."/>
            <person name="Lapidus A."/>
            <person name="Barry K."/>
            <person name="Detter J.C."/>
            <person name="Glavina del Rio T."/>
            <person name="Hammon N."/>
            <person name="Israni S."/>
            <person name="Dalin E."/>
            <person name="Tice H."/>
            <person name="Pitluck S."/>
            <person name="Munk A.C."/>
            <person name="Brettin T."/>
            <person name="Bruce D."/>
            <person name="Han C."/>
            <person name="Tapia R."/>
            <person name="Gilna P."/>
            <person name="Schmutz J."/>
            <person name="Larimer F."/>
            <person name="Land M."/>
            <person name="Hauser L."/>
            <person name="Kyrpides N."/>
            <person name="Lykidis A."/>
            <person name="Spiro S."/>
            <person name="Richardson D.J."/>
            <person name="Moir J.W.B."/>
            <person name="Ferguson S.J."/>
            <person name="van Spanning R.J.M."/>
            <person name="Richardson P."/>
        </authorList>
    </citation>
    <scope>NUCLEOTIDE SEQUENCE [LARGE SCALE GENOMIC DNA]</scope>
    <source>
        <strain>Pd 1222</strain>
    </source>
</reference>
<proteinExistence type="inferred from homology"/>
<sequence>MAETGAPLIRLRGVGREYPSGEGVLRVLTDIDLDIGQGEFVAVMGASGSGKSTLMNILGCLDRPSSGSYRMDGREVARLGAGELAALRRETFGFIFQRYHLLSEMTALGNVEVPAIYRGLPADARRARARDLLERLGLGDRTGHRPGQLSGGQQQRVSIARALVNDARVILADEPTGALDSRSGDEVLGILERLNAEGRTVVIVTHDPRVAARAHRVVEIADGRIVADRRTGAPAADPGPGPAQAPQPAPQPAPVQAPVQARVQARAAVPVLGRLAEALRMALLSMRAHKLRSFLTMLGIIIGIASVVSVVALGEGSRRQVLQNIAGLGTNTLQIFPGRDFGDMRSGRVTTLVTADAAALARQPHVASVSPTVGTSATLRHGATEASAQISGVGEQYFDVAGVALTQGRGFDEADVAAMGQNVVIDENTRTSLFGDGPALGQVFMAGKVPLRVIGVAEAQNRGPGGSTSLTVYAPYTTVQARYLGSTSVSGLTLRVADDVDMALAEQMVADILTRRHGTRDFFIVNNDQIRQTITSTTQTLALLIAAIAVISLVVGGIGVMNIMLVSVTERIGEIGLRMAVGARRGDIRAQFLIEAVLVCVIGGIAGILAALGFGLAFERMSSDFTLVYSPLSMLAALASACAIGLAFGYLPAVNAAKLDPVKALQKG</sequence>
<gene>
    <name evidence="1" type="primary">macB1</name>
    <name type="ordered locus">Pden_2937</name>
</gene>
<gene>
    <name evidence="1" type="primary">macB2</name>
    <name type="ordered locus">Pden_3444</name>
</gene>
<comment type="function">
    <text evidence="1">Non-canonical ABC transporter that contains transmembrane domains (TMD), which form a pore in the inner membrane, and an ATP-binding domain (NBD), which is responsible for energy generation. Confers resistance against macrolides.</text>
</comment>
<comment type="subunit">
    <text evidence="1">Homodimer.</text>
</comment>
<comment type="subcellular location">
    <subcellularLocation>
        <location evidence="1">Cell inner membrane</location>
        <topology evidence="1">Multi-pass membrane protein</topology>
    </subcellularLocation>
</comment>
<comment type="similarity">
    <text evidence="1">Belongs to the ABC transporter superfamily. Macrolide exporter (TC 3.A.1.122) family.</text>
</comment>